<name>SYAP1_MOUSE</name>
<protein>
    <recommendedName>
        <fullName evidence="6">Synapse-associated protein 1</fullName>
    </recommendedName>
    <alternativeName>
        <fullName evidence="1">BSD domain-containing signal transducer and Akt interactor protein</fullName>
        <shortName evidence="1">BSTA</shortName>
    </alternativeName>
</protein>
<dbReference type="EMBL" id="AK008390">
    <property type="protein sequence ID" value="BAB25643.1"/>
    <property type="molecule type" value="mRNA"/>
</dbReference>
<dbReference type="EMBL" id="AK014893">
    <property type="protein sequence ID" value="BAB29608.1"/>
    <property type="molecule type" value="mRNA"/>
</dbReference>
<dbReference type="EMBL" id="AK051251">
    <property type="protein sequence ID" value="BAC34575.1"/>
    <property type="molecule type" value="mRNA"/>
</dbReference>
<dbReference type="EMBL" id="AK147055">
    <property type="protein sequence ID" value="BAE27639.1"/>
    <property type="molecule type" value="mRNA"/>
</dbReference>
<dbReference type="EMBL" id="BC021373">
    <property type="protein sequence ID" value="AAH21373.1"/>
    <property type="molecule type" value="mRNA"/>
</dbReference>
<dbReference type="CCDS" id="CCDS30511.1"/>
<dbReference type="RefSeq" id="NP_080208.2">
    <property type="nucleotide sequence ID" value="NM_025932.2"/>
</dbReference>
<dbReference type="SMR" id="Q9D5V6"/>
<dbReference type="BioGRID" id="211897">
    <property type="interactions" value="1"/>
</dbReference>
<dbReference type="FunCoup" id="Q9D5V6">
    <property type="interactions" value="2919"/>
</dbReference>
<dbReference type="IntAct" id="Q9D5V6">
    <property type="interactions" value="1"/>
</dbReference>
<dbReference type="MINT" id="Q9D5V6"/>
<dbReference type="STRING" id="10090.ENSMUSP00000033723"/>
<dbReference type="GlyGen" id="Q9D5V6">
    <property type="glycosylation" value="1 site"/>
</dbReference>
<dbReference type="iPTMnet" id="Q9D5V6"/>
<dbReference type="PhosphoSitePlus" id="Q9D5V6"/>
<dbReference type="REPRODUCTION-2DPAGE" id="IPI00317599"/>
<dbReference type="jPOST" id="Q9D5V6"/>
<dbReference type="PaxDb" id="10090-ENSMUSP00000033723"/>
<dbReference type="PeptideAtlas" id="Q9D5V6"/>
<dbReference type="ProteomicsDB" id="258784"/>
<dbReference type="Pumba" id="Q9D5V6"/>
<dbReference type="Antibodypedia" id="395">
    <property type="antibodies" value="125 antibodies from 25 providers"/>
</dbReference>
<dbReference type="DNASU" id="67043"/>
<dbReference type="Ensembl" id="ENSMUST00000033723.4">
    <property type="protein sequence ID" value="ENSMUSP00000033723.4"/>
    <property type="gene ID" value="ENSMUSG00000031357.4"/>
</dbReference>
<dbReference type="GeneID" id="67043"/>
<dbReference type="KEGG" id="mmu:67043"/>
<dbReference type="UCSC" id="uc009uun.2">
    <property type="organism name" value="mouse"/>
</dbReference>
<dbReference type="AGR" id="MGI:1914293"/>
<dbReference type="CTD" id="94056"/>
<dbReference type="MGI" id="MGI:1914293">
    <property type="gene designation" value="Syap1"/>
</dbReference>
<dbReference type="VEuPathDB" id="HostDB:ENSMUSG00000031357"/>
<dbReference type="eggNOG" id="KOG4310">
    <property type="taxonomic scope" value="Eukaryota"/>
</dbReference>
<dbReference type="GeneTree" id="ENSGT00390000007662"/>
<dbReference type="HOGENOM" id="CLU_046184_1_1_1"/>
<dbReference type="InParanoid" id="Q9D5V6"/>
<dbReference type="OMA" id="DTCNLNQ"/>
<dbReference type="OrthoDB" id="47923at2759"/>
<dbReference type="PhylomeDB" id="Q9D5V6"/>
<dbReference type="TreeFam" id="TF319666"/>
<dbReference type="BioGRID-ORCS" id="67043">
    <property type="hits" value="3 hits in 78 CRISPR screens"/>
</dbReference>
<dbReference type="ChiTaRS" id="Syap1">
    <property type="organism name" value="mouse"/>
</dbReference>
<dbReference type="PRO" id="PR:Q9D5V6"/>
<dbReference type="Proteomes" id="UP000000589">
    <property type="component" value="Chromosome X"/>
</dbReference>
<dbReference type="RNAct" id="Q9D5V6">
    <property type="molecule type" value="protein"/>
</dbReference>
<dbReference type="Bgee" id="ENSMUSG00000031357">
    <property type="expression patterns" value="Expressed in white adipose tissue and 249 other cell types or tissues"/>
</dbReference>
<dbReference type="GO" id="GO:0030424">
    <property type="term" value="C:axon"/>
    <property type="evidence" value="ECO:0000314"/>
    <property type="project" value="UniProtKB"/>
</dbReference>
<dbReference type="GO" id="GO:0009898">
    <property type="term" value="C:cytoplasmic side of plasma membrane"/>
    <property type="evidence" value="ECO:0000250"/>
    <property type="project" value="UniProtKB"/>
</dbReference>
<dbReference type="GO" id="GO:0005829">
    <property type="term" value="C:cytosol"/>
    <property type="evidence" value="ECO:0007669"/>
    <property type="project" value="Ensembl"/>
</dbReference>
<dbReference type="GO" id="GO:0030425">
    <property type="term" value="C:dendrite"/>
    <property type="evidence" value="ECO:0000314"/>
    <property type="project" value="UniProtKB"/>
</dbReference>
<dbReference type="GO" id="GO:0005794">
    <property type="term" value="C:Golgi apparatus"/>
    <property type="evidence" value="ECO:0000314"/>
    <property type="project" value="UniProtKB"/>
</dbReference>
<dbReference type="GO" id="GO:0030426">
    <property type="term" value="C:growth cone"/>
    <property type="evidence" value="ECO:0000314"/>
    <property type="project" value="UniProtKB"/>
</dbReference>
<dbReference type="GO" id="GO:0005654">
    <property type="term" value="C:nucleoplasm"/>
    <property type="evidence" value="ECO:0007669"/>
    <property type="project" value="Ensembl"/>
</dbReference>
<dbReference type="GO" id="GO:0005634">
    <property type="term" value="C:nucleus"/>
    <property type="evidence" value="ECO:0000314"/>
    <property type="project" value="MGI"/>
</dbReference>
<dbReference type="GO" id="GO:0043204">
    <property type="term" value="C:perikaryon"/>
    <property type="evidence" value="ECO:0000314"/>
    <property type="project" value="UniProtKB"/>
</dbReference>
<dbReference type="GO" id="GO:0048471">
    <property type="term" value="C:perinuclear region of cytoplasm"/>
    <property type="evidence" value="ECO:0000314"/>
    <property type="project" value="UniProtKB"/>
</dbReference>
<dbReference type="GO" id="GO:0045211">
    <property type="term" value="C:postsynaptic membrane"/>
    <property type="evidence" value="ECO:0000314"/>
    <property type="project" value="UniProtKB"/>
</dbReference>
<dbReference type="GO" id="GO:0042734">
    <property type="term" value="C:presynaptic membrane"/>
    <property type="evidence" value="ECO:0000314"/>
    <property type="project" value="UniProtKB"/>
</dbReference>
<dbReference type="GO" id="GO:0030154">
    <property type="term" value="P:cell differentiation"/>
    <property type="evidence" value="ECO:0007669"/>
    <property type="project" value="UniProtKB-KW"/>
</dbReference>
<dbReference type="GO" id="GO:0071364">
    <property type="term" value="P:cellular response to epidermal growth factor stimulus"/>
    <property type="evidence" value="ECO:0000315"/>
    <property type="project" value="UniProtKB"/>
</dbReference>
<dbReference type="GO" id="GO:0032869">
    <property type="term" value="P:cellular response to insulin stimulus"/>
    <property type="evidence" value="ECO:0000315"/>
    <property type="project" value="UniProtKB"/>
</dbReference>
<dbReference type="GO" id="GO:1990314">
    <property type="term" value="P:cellular response to insulin-like growth factor stimulus"/>
    <property type="evidence" value="ECO:0000250"/>
    <property type="project" value="UniProtKB"/>
</dbReference>
<dbReference type="GO" id="GO:0036120">
    <property type="term" value="P:cellular response to platelet-derived growth factor stimulus"/>
    <property type="evidence" value="ECO:0000250"/>
    <property type="project" value="UniProtKB"/>
</dbReference>
<dbReference type="GO" id="GO:0045600">
    <property type="term" value="P:positive regulation of fat cell differentiation"/>
    <property type="evidence" value="ECO:0000315"/>
    <property type="project" value="UniProtKB"/>
</dbReference>
<dbReference type="GO" id="GO:0071902">
    <property type="term" value="P:positive regulation of protein serine/threonine kinase activity"/>
    <property type="evidence" value="ECO:0000315"/>
    <property type="project" value="UniProtKB"/>
</dbReference>
<dbReference type="GO" id="GO:0038203">
    <property type="term" value="P:TORC2 signaling"/>
    <property type="evidence" value="ECO:0000315"/>
    <property type="project" value="UniProtKB"/>
</dbReference>
<dbReference type="FunFam" id="1.10.3970.10:FF:000001">
    <property type="entry name" value="synapse-associated protein 1 isoform X1"/>
    <property type="match status" value="1"/>
</dbReference>
<dbReference type="Gene3D" id="1.10.3970.10">
    <property type="entry name" value="BSD domain"/>
    <property type="match status" value="1"/>
</dbReference>
<dbReference type="InterPro" id="IPR005607">
    <property type="entry name" value="BSD_dom"/>
</dbReference>
<dbReference type="InterPro" id="IPR035925">
    <property type="entry name" value="BSD_dom_sf"/>
</dbReference>
<dbReference type="InterPro" id="IPR051494">
    <property type="entry name" value="BSD_domain-containing"/>
</dbReference>
<dbReference type="PANTHER" id="PTHR16019">
    <property type="entry name" value="SYNAPSE-ASSOCIATED PROTEIN"/>
    <property type="match status" value="1"/>
</dbReference>
<dbReference type="PANTHER" id="PTHR16019:SF6">
    <property type="entry name" value="SYNAPSE-ASSOCIATED PROTEIN 1"/>
    <property type="match status" value="1"/>
</dbReference>
<dbReference type="Pfam" id="PF03909">
    <property type="entry name" value="BSD"/>
    <property type="match status" value="1"/>
</dbReference>
<dbReference type="SMART" id="SM00751">
    <property type="entry name" value="BSD"/>
    <property type="match status" value="1"/>
</dbReference>
<dbReference type="SUPFAM" id="SSF140383">
    <property type="entry name" value="BSD domain-like"/>
    <property type="match status" value="1"/>
</dbReference>
<dbReference type="PROSITE" id="PS50858">
    <property type="entry name" value="BSD"/>
    <property type="match status" value="1"/>
</dbReference>
<reference key="1">
    <citation type="journal article" date="2005" name="Science">
        <title>The transcriptional landscape of the mammalian genome.</title>
        <authorList>
            <person name="Carninci P."/>
            <person name="Kasukawa T."/>
            <person name="Katayama S."/>
            <person name="Gough J."/>
            <person name="Frith M.C."/>
            <person name="Maeda N."/>
            <person name="Oyama R."/>
            <person name="Ravasi T."/>
            <person name="Lenhard B."/>
            <person name="Wells C."/>
            <person name="Kodzius R."/>
            <person name="Shimokawa K."/>
            <person name="Bajic V.B."/>
            <person name="Brenner S.E."/>
            <person name="Batalov S."/>
            <person name="Forrest A.R."/>
            <person name="Zavolan M."/>
            <person name="Davis M.J."/>
            <person name="Wilming L.G."/>
            <person name="Aidinis V."/>
            <person name="Allen J.E."/>
            <person name="Ambesi-Impiombato A."/>
            <person name="Apweiler R."/>
            <person name="Aturaliya R.N."/>
            <person name="Bailey T.L."/>
            <person name="Bansal M."/>
            <person name="Baxter L."/>
            <person name="Beisel K.W."/>
            <person name="Bersano T."/>
            <person name="Bono H."/>
            <person name="Chalk A.M."/>
            <person name="Chiu K.P."/>
            <person name="Choudhary V."/>
            <person name="Christoffels A."/>
            <person name="Clutterbuck D.R."/>
            <person name="Crowe M.L."/>
            <person name="Dalla E."/>
            <person name="Dalrymple B.P."/>
            <person name="de Bono B."/>
            <person name="Della Gatta G."/>
            <person name="di Bernardo D."/>
            <person name="Down T."/>
            <person name="Engstrom P."/>
            <person name="Fagiolini M."/>
            <person name="Faulkner G."/>
            <person name="Fletcher C.F."/>
            <person name="Fukushima T."/>
            <person name="Furuno M."/>
            <person name="Futaki S."/>
            <person name="Gariboldi M."/>
            <person name="Georgii-Hemming P."/>
            <person name="Gingeras T.R."/>
            <person name="Gojobori T."/>
            <person name="Green R.E."/>
            <person name="Gustincich S."/>
            <person name="Harbers M."/>
            <person name="Hayashi Y."/>
            <person name="Hensch T.K."/>
            <person name="Hirokawa N."/>
            <person name="Hill D."/>
            <person name="Huminiecki L."/>
            <person name="Iacono M."/>
            <person name="Ikeo K."/>
            <person name="Iwama A."/>
            <person name="Ishikawa T."/>
            <person name="Jakt M."/>
            <person name="Kanapin A."/>
            <person name="Katoh M."/>
            <person name="Kawasawa Y."/>
            <person name="Kelso J."/>
            <person name="Kitamura H."/>
            <person name="Kitano H."/>
            <person name="Kollias G."/>
            <person name="Krishnan S.P."/>
            <person name="Kruger A."/>
            <person name="Kummerfeld S.K."/>
            <person name="Kurochkin I.V."/>
            <person name="Lareau L.F."/>
            <person name="Lazarevic D."/>
            <person name="Lipovich L."/>
            <person name="Liu J."/>
            <person name="Liuni S."/>
            <person name="McWilliam S."/>
            <person name="Madan Babu M."/>
            <person name="Madera M."/>
            <person name="Marchionni L."/>
            <person name="Matsuda H."/>
            <person name="Matsuzawa S."/>
            <person name="Miki H."/>
            <person name="Mignone F."/>
            <person name="Miyake S."/>
            <person name="Morris K."/>
            <person name="Mottagui-Tabar S."/>
            <person name="Mulder N."/>
            <person name="Nakano N."/>
            <person name="Nakauchi H."/>
            <person name="Ng P."/>
            <person name="Nilsson R."/>
            <person name="Nishiguchi S."/>
            <person name="Nishikawa S."/>
            <person name="Nori F."/>
            <person name="Ohara O."/>
            <person name="Okazaki Y."/>
            <person name="Orlando V."/>
            <person name="Pang K.C."/>
            <person name="Pavan W.J."/>
            <person name="Pavesi G."/>
            <person name="Pesole G."/>
            <person name="Petrovsky N."/>
            <person name="Piazza S."/>
            <person name="Reed J."/>
            <person name="Reid J.F."/>
            <person name="Ring B.Z."/>
            <person name="Ringwald M."/>
            <person name="Rost B."/>
            <person name="Ruan Y."/>
            <person name="Salzberg S.L."/>
            <person name="Sandelin A."/>
            <person name="Schneider C."/>
            <person name="Schoenbach C."/>
            <person name="Sekiguchi K."/>
            <person name="Semple C.A."/>
            <person name="Seno S."/>
            <person name="Sessa L."/>
            <person name="Sheng Y."/>
            <person name="Shibata Y."/>
            <person name="Shimada H."/>
            <person name="Shimada K."/>
            <person name="Silva D."/>
            <person name="Sinclair B."/>
            <person name="Sperling S."/>
            <person name="Stupka E."/>
            <person name="Sugiura K."/>
            <person name="Sultana R."/>
            <person name="Takenaka Y."/>
            <person name="Taki K."/>
            <person name="Tammoja K."/>
            <person name="Tan S.L."/>
            <person name="Tang S."/>
            <person name="Taylor M.S."/>
            <person name="Tegner J."/>
            <person name="Teichmann S.A."/>
            <person name="Ueda H.R."/>
            <person name="van Nimwegen E."/>
            <person name="Verardo R."/>
            <person name="Wei C.L."/>
            <person name="Yagi K."/>
            <person name="Yamanishi H."/>
            <person name="Zabarovsky E."/>
            <person name="Zhu S."/>
            <person name="Zimmer A."/>
            <person name="Hide W."/>
            <person name="Bult C."/>
            <person name="Grimmond S.M."/>
            <person name="Teasdale R.D."/>
            <person name="Liu E.T."/>
            <person name="Brusic V."/>
            <person name="Quackenbush J."/>
            <person name="Wahlestedt C."/>
            <person name="Mattick J.S."/>
            <person name="Hume D.A."/>
            <person name="Kai C."/>
            <person name="Sasaki D."/>
            <person name="Tomaru Y."/>
            <person name="Fukuda S."/>
            <person name="Kanamori-Katayama M."/>
            <person name="Suzuki M."/>
            <person name="Aoki J."/>
            <person name="Arakawa T."/>
            <person name="Iida J."/>
            <person name="Imamura K."/>
            <person name="Itoh M."/>
            <person name="Kato T."/>
            <person name="Kawaji H."/>
            <person name="Kawagashira N."/>
            <person name="Kawashima T."/>
            <person name="Kojima M."/>
            <person name="Kondo S."/>
            <person name="Konno H."/>
            <person name="Nakano K."/>
            <person name="Ninomiya N."/>
            <person name="Nishio T."/>
            <person name="Okada M."/>
            <person name="Plessy C."/>
            <person name="Shibata K."/>
            <person name="Shiraki T."/>
            <person name="Suzuki S."/>
            <person name="Tagami M."/>
            <person name="Waki K."/>
            <person name="Watahiki A."/>
            <person name="Okamura-Oho Y."/>
            <person name="Suzuki H."/>
            <person name="Kawai J."/>
            <person name="Hayashizaki Y."/>
        </authorList>
    </citation>
    <scope>NUCLEOTIDE SEQUENCE [LARGE SCALE MRNA]</scope>
    <source>
        <strain>C57BL/6J</strain>
        <tissue>Heart</tissue>
        <tissue>Small intestine</tissue>
        <tissue>Spinal ganglion</tissue>
        <tissue>Testis</tissue>
    </source>
</reference>
<reference key="2">
    <citation type="journal article" date="2004" name="Genome Res.">
        <title>The status, quality, and expansion of the NIH full-length cDNA project: the Mammalian Gene Collection (MGC).</title>
        <authorList>
            <consortium name="The MGC Project Team"/>
        </authorList>
    </citation>
    <scope>NUCLEOTIDE SEQUENCE [LARGE SCALE MRNA]</scope>
</reference>
<reference key="3">
    <citation type="journal article" date="2007" name="Proc. Natl. Acad. Sci. U.S.A.">
        <title>Large-scale phosphorylation analysis of mouse liver.</title>
        <authorList>
            <person name="Villen J."/>
            <person name="Beausoleil S.A."/>
            <person name="Gerber S.A."/>
            <person name="Gygi S.P."/>
        </authorList>
    </citation>
    <scope>IDENTIFICATION BY MASS SPECTROMETRY [LARGE SCALE ANALYSIS]</scope>
    <source>
        <tissue>Liver</tissue>
    </source>
</reference>
<reference key="4">
    <citation type="journal article" date="2010" name="Cell">
        <title>A tissue-specific atlas of mouse protein phosphorylation and expression.</title>
        <authorList>
            <person name="Huttlin E.L."/>
            <person name="Jedrychowski M.P."/>
            <person name="Elias J.E."/>
            <person name="Goswami T."/>
            <person name="Rad R."/>
            <person name="Beausoleil S.A."/>
            <person name="Villen J."/>
            <person name="Haas W."/>
            <person name="Sowa M.E."/>
            <person name="Gygi S.P."/>
        </authorList>
    </citation>
    <scope>PHOSPHORYLATION [LARGE SCALE ANALYSIS] AT THR-262; SER-283 AND SER-298</scope>
    <scope>IDENTIFICATION BY MASS SPECTROMETRY [LARGE SCALE ANALYSIS]</scope>
    <source>
        <tissue>Brain</tissue>
        <tissue>Brown adipose tissue</tissue>
        <tissue>Heart</tissue>
        <tissue>Kidney</tissue>
        <tissue>Liver</tissue>
        <tissue>Lung</tissue>
        <tissue>Pancreas</tissue>
        <tissue>Spleen</tissue>
        <tissue>Testis</tissue>
    </source>
</reference>
<reference key="5">
    <citation type="journal article" date="2013" name="Sci. Signal.">
        <title>BSTA promotes mTORC2-mediated phosphorylation of Akt1 to suppress expression of FoxC2 and stimulate adipocyte differentiation.</title>
        <authorList>
            <person name="Yao Y."/>
            <person name="Suraokar M."/>
            <person name="Darnay B.G."/>
            <person name="Hollier B.G."/>
            <person name="Shaiken T.E."/>
            <person name="Asano T."/>
            <person name="Chen C.H."/>
            <person name="Chang B.H."/>
            <person name="Lu Y."/>
            <person name="Mills G.B."/>
            <person name="Sarbassov D."/>
            <person name="Mani S.A."/>
            <person name="Abbruzzese J.L."/>
            <person name="Reddy S.A."/>
        </authorList>
    </citation>
    <scope>FUNCTION</scope>
    <scope>INTERACTION WITH AKT1</scope>
    <scope>PHOSPHORYLATION</scope>
    <scope>TISSUE SPECIFICITY</scope>
    <scope>INDUCTION</scope>
</reference>
<reference key="6">
    <citation type="journal article" date="2016" name="Histochem. Cell Biol.">
        <title>Initial characterization of a Syap1 knock-out mouse and distribution of Syap1 in mouse brain and cultured motoneurons.</title>
        <authorList>
            <person name="Schmitt D."/>
            <person name="Funk N."/>
            <person name="Blum R."/>
            <person name="Asan E."/>
            <person name="Andersen L."/>
            <person name="Ruelicke T."/>
            <person name="Sendtner M."/>
            <person name="Buchner E."/>
        </authorList>
    </citation>
    <scope>SUBCELLULAR LOCATION</scope>
    <scope>TISSUE SPECIFICITY</scope>
    <scope>DISRUPTION PHENOTYPE</scope>
</reference>
<keyword id="KW-1003">Cell membrane</keyword>
<keyword id="KW-0966">Cell projection</keyword>
<keyword id="KW-0963">Cytoplasm</keyword>
<keyword id="KW-0221">Differentiation</keyword>
<keyword id="KW-0333">Golgi apparatus</keyword>
<keyword id="KW-0472">Membrane</keyword>
<keyword id="KW-0597">Phosphoprotein</keyword>
<keyword id="KW-0628">Postsynaptic cell membrane</keyword>
<keyword id="KW-1185">Reference proteome</keyword>
<keyword id="KW-0770">Synapse</keyword>
<accession>Q9D5V6</accession>
<accession>Q3UI67</accession>
<accession>Q9D870</accession>
<sequence>MFGGLSSWLGLKPPEGAAAEGEEPPSRDGDKLSAGAAPSEESPERPVEPTEEQQQQPPTEDPQFLHQAKGLGNYLYNFASAATKKITESVTETAQTIKKSVEEGKIDDILDKTILGDFQKEQKKFVEEQNTKKSEAAVPPWVESHDEETIQQQILALSADKRNFLRDPPAGVQFNFDFDQMYPVALVMLQEDELLSKMRFALVPKLVKEEVFWRNYFYRISLIKQSAQLTALAAQQQASGKEEKSSNRDDNLPLTEAVRPKTPPVVIKSQLKSQEDEEEISTSPGVSEFVSDAFDTCSLNQEDLRKEMEQLVLDKKQEEATALEEDSTDWEKELQQELQEYEVVAESEKRDENWDKEIEKMLQES</sequence>
<feature type="chain" id="PRO_0000072356" description="Synapse-associated protein 1">
    <location>
        <begin position="1"/>
        <end position="365"/>
    </location>
</feature>
<feature type="domain" description="BSD" evidence="2">
    <location>
        <begin position="172"/>
        <end position="224"/>
    </location>
</feature>
<feature type="region of interest" description="Disordered" evidence="3">
    <location>
        <begin position="1"/>
        <end position="65"/>
    </location>
</feature>
<feature type="region of interest" description="Disordered" evidence="3">
    <location>
        <begin position="237"/>
        <end position="259"/>
    </location>
</feature>
<feature type="region of interest" description="Disordered" evidence="3">
    <location>
        <begin position="344"/>
        <end position="365"/>
    </location>
</feature>
<feature type="compositionally biased region" description="Low complexity" evidence="3">
    <location>
        <begin position="52"/>
        <end position="62"/>
    </location>
</feature>
<feature type="compositionally biased region" description="Basic and acidic residues" evidence="3">
    <location>
        <begin position="240"/>
        <end position="251"/>
    </location>
</feature>
<feature type="compositionally biased region" description="Basic and acidic residues" evidence="3">
    <location>
        <begin position="346"/>
        <end position="365"/>
    </location>
</feature>
<feature type="modified residue" description="Phosphothreonine" evidence="8">
    <location>
        <position position="262"/>
    </location>
</feature>
<feature type="modified residue" description="Phosphoserine" evidence="8">
    <location>
        <position position="283"/>
    </location>
</feature>
<feature type="modified residue" description="Phosphoserine" evidence="8">
    <location>
        <position position="298"/>
    </location>
</feature>
<feature type="modified residue" description="Phosphoserine" evidence="1">
    <location>
        <position position="327"/>
    </location>
</feature>
<feature type="sequence conflict" description="In Ref. 1; BAB25643." evidence="6" ref="1">
    <original>E</original>
    <variation>K</variation>
    <location>
        <position position="243"/>
    </location>
</feature>
<gene>
    <name evidence="7" type="primary">Syap1</name>
</gene>
<organism>
    <name type="scientific">Mus musculus</name>
    <name type="common">Mouse</name>
    <dbReference type="NCBI Taxonomy" id="10090"/>
    <lineage>
        <taxon>Eukaryota</taxon>
        <taxon>Metazoa</taxon>
        <taxon>Chordata</taxon>
        <taxon>Craniata</taxon>
        <taxon>Vertebrata</taxon>
        <taxon>Euteleostomi</taxon>
        <taxon>Mammalia</taxon>
        <taxon>Eutheria</taxon>
        <taxon>Euarchontoglires</taxon>
        <taxon>Glires</taxon>
        <taxon>Rodentia</taxon>
        <taxon>Myomorpha</taxon>
        <taxon>Muroidea</taxon>
        <taxon>Muridae</taxon>
        <taxon>Murinae</taxon>
        <taxon>Mus</taxon>
        <taxon>Mus</taxon>
    </lineage>
</organism>
<evidence type="ECO:0000250" key="1">
    <source>
        <dbReference type="UniProtKB" id="Q96A49"/>
    </source>
</evidence>
<evidence type="ECO:0000255" key="2">
    <source>
        <dbReference type="PROSITE-ProRule" id="PRU00036"/>
    </source>
</evidence>
<evidence type="ECO:0000256" key="3">
    <source>
        <dbReference type="SAM" id="MobiDB-lite"/>
    </source>
</evidence>
<evidence type="ECO:0000269" key="4">
    <source>
    </source>
</evidence>
<evidence type="ECO:0000269" key="5">
    <source>
    </source>
</evidence>
<evidence type="ECO:0000305" key="6"/>
<evidence type="ECO:0000312" key="7">
    <source>
        <dbReference type="MGI" id="MGI:1914293"/>
    </source>
</evidence>
<evidence type="ECO:0007744" key="8">
    <source>
    </source>
</evidence>
<proteinExistence type="evidence at protein level"/>
<comment type="function">
    <text evidence="4">Plays a role in adipocyte differentiation by promoting mTORC2-mediated phosphorylation of AKT1 at 'Ser-473' after growth factor stimulation (PubMed:23300339).</text>
</comment>
<comment type="subunit">
    <text evidence="4">Interacts (via phosphorylated form and BSD domain) with AKT1; this interaction is enhanced in a mTORC2-mediated manner in response to epidermal growth factor (EGF) stimulation and activates AKT1 (PubMed:23300339).</text>
</comment>
<comment type="subcellular location">
    <subcellularLocation>
        <location evidence="5">Cytoplasm</location>
        <location evidence="5">Perinuclear region</location>
    </subcellularLocation>
    <subcellularLocation>
        <location evidence="5">Golgi apparatus</location>
    </subcellularLocation>
    <subcellularLocation>
        <location evidence="5">Perikaryon</location>
    </subcellularLocation>
    <subcellularLocation>
        <location evidence="5">Cell projection</location>
        <location evidence="5">Axon</location>
    </subcellularLocation>
    <subcellularLocation>
        <location evidence="5">Cell projection</location>
        <location evidence="5">Dendrite</location>
    </subcellularLocation>
    <subcellularLocation>
        <location evidence="5">Cell projection</location>
        <location evidence="5">Growth cone</location>
    </subcellularLocation>
    <subcellularLocation>
        <location evidence="5">Presynaptic cell membrane</location>
    </subcellularLocation>
    <subcellularLocation>
        <location evidence="5">Postsynaptic cell membrane</location>
    </subcellularLocation>
    <subcellularLocation>
        <location evidence="1">Membrane</location>
    </subcellularLocation>
    <text evidence="1 5">Localizes to cholinergic neuromuscular junctions and in actin-rich growth cone regions (PubMed:27344443). Membrane-associated in a epidermal growth factor (EGF)-dependent manner (By similarity).</text>
</comment>
<comment type="tissue specificity">
    <text evidence="4 5">Expressed in the liver, kidney, skeletal muscle and in white and brown adipose tissues (PubMed:23300339, PubMed:27344443). Expressed in the cortex, cerebellum, thalamus, hippocampus, braistem, olfactory bulb, spinal cord and striatum of the brain (PubMed:27344443). Expressed in most neuropil regions containing glutamatergic synaptic terminals (PubMed:27344443). Expressed in the CA1, CA2 and CA3 perikarya of the hippocampus (PubMed:27344443). Expressed in neurons and Purkinje cells (at the protein level) (PubMed:27344443).</text>
</comment>
<comment type="induction">
    <text evidence="4">Up-regulated during adipocyte differentiation (at protein level) (PubMed:23300339).</text>
</comment>
<comment type="PTM">
    <text evidence="4">Phosphorylated (PubMed:23300339). Phosphorylation increases in a mTORC2-mediated manner in response to epidermal growth factor (EGF) stimulation (PubMed:23300339).</text>
</comment>
<comment type="disruption phenotype">
    <text evidence="5">Mice appear normal and healthy (PubMed:27344443). Display no alteration on the survival or axonal elongation in primary embryonic motoneurons (PubMed:27344443). Show no alteration in total AKT phosphorylation in primary embryonic motoneurons (PubMed:27344443).</text>
</comment>